<feature type="chain" id="PRO_0000382127" description="ATP synthase subunit delta">
    <location>
        <begin position="1"/>
        <end position="177"/>
    </location>
</feature>
<proteinExistence type="inferred from homology"/>
<protein>
    <recommendedName>
        <fullName evidence="1">ATP synthase subunit delta</fullName>
    </recommendedName>
    <alternativeName>
        <fullName evidence="1">ATP synthase F(1) sector subunit delta</fullName>
    </alternativeName>
    <alternativeName>
        <fullName evidence="1">F-type ATPase subunit delta</fullName>
        <shortName evidence="1">F-ATPase subunit delta</shortName>
    </alternativeName>
</protein>
<sequence length="177" mass="19524">MAEFATIARPYAKALFGLAQEKNQIESWLGGLEKLAAVVQEGKVALLIDRPETNASEKADILIDLVGLKDKELKNFVIVLAGQKRLSILPEVYAQYQDLTLSFNHIKSAVIYSAYPLTDKQVGELAQMLNKRFDSELKISVEIEPELIGGIKVEVGDQVLDLSVQGKLSALYTTMTN</sequence>
<keyword id="KW-0066">ATP synthesis</keyword>
<keyword id="KW-0997">Cell inner membrane</keyword>
<keyword id="KW-1003">Cell membrane</keyword>
<keyword id="KW-0139">CF(1)</keyword>
<keyword id="KW-0375">Hydrogen ion transport</keyword>
<keyword id="KW-0406">Ion transport</keyword>
<keyword id="KW-0472">Membrane</keyword>
<keyword id="KW-0813">Transport</keyword>
<dbReference type="EMBL" id="CP001050">
    <property type="protein sequence ID" value="ACF31222.1"/>
    <property type="status" value="ALT_INIT"/>
    <property type="molecule type" value="Genomic_DNA"/>
</dbReference>
<dbReference type="RefSeq" id="WP_003690447.1">
    <property type="nucleotide sequence ID" value="NC_011035.1"/>
</dbReference>
<dbReference type="SMR" id="B4RJF7"/>
<dbReference type="KEGG" id="ngk:NGK_2623"/>
<dbReference type="HOGENOM" id="CLU_085114_3_0_4"/>
<dbReference type="Proteomes" id="UP000002564">
    <property type="component" value="Chromosome"/>
</dbReference>
<dbReference type="GO" id="GO:0005886">
    <property type="term" value="C:plasma membrane"/>
    <property type="evidence" value="ECO:0007669"/>
    <property type="project" value="UniProtKB-SubCell"/>
</dbReference>
<dbReference type="GO" id="GO:0045259">
    <property type="term" value="C:proton-transporting ATP synthase complex"/>
    <property type="evidence" value="ECO:0007669"/>
    <property type="project" value="UniProtKB-KW"/>
</dbReference>
<dbReference type="GO" id="GO:0046933">
    <property type="term" value="F:proton-transporting ATP synthase activity, rotational mechanism"/>
    <property type="evidence" value="ECO:0007669"/>
    <property type="project" value="UniProtKB-UniRule"/>
</dbReference>
<dbReference type="Gene3D" id="1.10.520.20">
    <property type="entry name" value="N-terminal domain of the delta subunit of the F1F0-ATP synthase"/>
    <property type="match status" value="1"/>
</dbReference>
<dbReference type="HAMAP" id="MF_01416">
    <property type="entry name" value="ATP_synth_delta_bact"/>
    <property type="match status" value="1"/>
</dbReference>
<dbReference type="InterPro" id="IPR026015">
    <property type="entry name" value="ATP_synth_OSCP/delta_N_sf"/>
</dbReference>
<dbReference type="InterPro" id="IPR020781">
    <property type="entry name" value="ATPase_OSCP/d_CS"/>
</dbReference>
<dbReference type="InterPro" id="IPR000711">
    <property type="entry name" value="ATPase_OSCP/dsu"/>
</dbReference>
<dbReference type="NCBIfam" id="TIGR01145">
    <property type="entry name" value="ATP_synt_delta"/>
    <property type="match status" value="1"/>
</dbReference>
<dbReference type="NCBIfam" id="NF004402">
    <property type="entry name" value="PRK05758.2-2"/>
    <property type="match status" value="1"/>
</dbReference>
<dbReference type="PANTHER" id="PTHR11910">
    <property type="entry name" value="ATP SYNTHASE DELTA CHAIN"/>
    <property type="match status" value="1"/>
</dbReference>
<dbReference type="Pfam" id="PF00213">
    <property type="entry name" value="OSCP"/>
    <property type="match status" value="1"/>
</dbReference>
<dbReference type="PRINTS" id="PR00125">
    <property type="entry name" value="ATPASEDELTA"/>
</dbReference>
<dbReference type="SUPFAM" id="SSF47928">
    <property type="entry name" value="N-terminal domain of the delta subunit of the F1F0-ATP synthase"/>
    <property type="match status" value="1"/>
</dbReference>
<dbReference type="PROSITE" id="PS00389">
    <property type="entry name" value="ATPASE_DELTA"/>
    <property type="match status" value="1"/>
</dbReference>
<organism>
    <name type="scientific">Neisseria gonorrhoeae (strain NCCP11945)</name>
    <dbReference type="NCBI Taxonomy" id="521006"/>
    <lineage>
        <taxon>Bacteria</taxon>
        <taxon>Pseudomonadati</taxon>
        <taxon>Pseudomonadota</taxon>
        <taxon>Betaproteobacteria</taxon>
        <taxon>Neisseriales</taxon>
        <taxon>Neisseriaceae</taxon>
        <taxon>Neisseria</taxon>
    </lineage>
</organism>
<reference key="1">
    <citation type="journal article" date="2008" name="J. Bacteriol.">
        <title>Complete genome sequence of Neisseria gonorrhoeae NCCP11945.</title>
        <authorList>
            <person name="Chung G.T."/>
            <person name="Yoo J.S."/>
            <person name="Oh H.B."/>
            <person name="Lee Y.S."/>
            <person name="Cha S.H."/>
            <person name="Kim S.J."/>
            <person name="Yoo C.K."/>
        </authorList>
    </citation>
    <scope>NUCLEOTIDE SEQUENCE [LARGE SCALE GENOMIC DNA]</scope>
    <source>
        <strain>NCCP11945</strain>
    </source>
</reference>
<name>ATPD_NEIG2</name>
<comment type="function">
    <text evidence="1">F(1)F(0) ATP synthase produces ATP from ADP in the presence of a proton or sodium gradient. F-type ATPases consist of two structural domains, F(1) containing the extramembraneous catalytic core and F(0) containing the membrane proton channel, linked together by a central stalk and a peripheral stalk. During catalysis, ATP synthesis in the catalytic domain of F(1) is coupled via a rotary mechanism of the central stalk subunits to proton translocation.</text>
</comment>
<comment type="function">
    <text evidence="1">This protein is part of the stalk that links CF(0) to CF(1). It either transmits conformational changes from CF(0) to CF(1) or is implicated in proton conduction.</text>
</comment>
<comment type="subunit">
    <text evidence="1">F-type ATPases have 2 components, F(1) - the catalytic core - and F(0) - the membrane proton channel. F(1) has five subunits: alpha(3), beta(3), gamma(1), delta(1), epsilon(1). F(0) has three main subunits: a(1), b(2) and c(10-14). The alpha and beta chains form an alternating ring which encloses part of the gamma chain. F(1) is attached to F(0) by a central stalk formed by the gamma and epsilon chains, while a peripheral stalk is formed by the delta and b chains.</text>
</comment>
<comment type="subcellular location">
    <subcellularLocation>
        <location evidence="1">Cell inner membrane</location>
        <topology evidence="1">Peripheral membrane protein</topology>
    </subcellularLocation>
</comment>
<comment type="similarity">
    <text evidence="1">Belongs to the ATPase delta chain family.</text>
</comment>
<comment type="sequence caution" evidence="2">
    <conflict type="erroneous initiation">
        <sequence resource="EMBL-CDS" id="ACF31222"/>
    </conflict>
</comment>
<evidence type="ECO:0000255" key="1">
    <source>
        <dbReference type="HAMAP-Rule" id="MF_01416"/>
    </source>
</evidence>
<evidence type="ECO:0000305" key="2"/>
<gene>
    <name evidence="1" type="primary">atpH</name>
    <name type="ordered locus">NGK_2623</name>
</gene>
<accession>B4RJF7</accession>